<protein>
    <recommendedName>
        <fullName>Testis development-related protein</fullName>
    </recommendedName>
</protein>
<organism>
    <name type="scientific">Mus musculus</name>
    <name type="common">Mouse</name>
    <dbReference type="NCBI Taxonomy" id="10090"/>
    <lineage>
        <taxon>Eukaryota</taxon>
        <taxon>Metazoa</taxon>
        <taxon>Chordata</taxon>
        <taxon>Craniata</taxon>
        <taxon>Vertebrata</taxon>
        <taxon>Euteleostomi</taxon>
        <taxon>Mammalia</taxon>
        <taxon>Eutheria</taxon>
        <taxon>Euarchontoglires</taxon>
        <taxon>Glires</taxon>
        <taxon>Rodentia</taxon>
        <taxon>Myomorpha</taxon>
        <taxon>Muroidea</taxon>
        <taxon>Muridae</taxon>
        <taxon>Murinae</taxon>
        <taxon>Mus</taxon>
        <taxon>Mus</taxon>
    </lineage>
</organism>
<dbReference type="EMBL" id="AK077810">
    <property type="protein sequence ID" value="BAC37021.1"/>
    <property type="molecule type" value="mRNA"/>
</dbReference>
<dbReference type="EMBL" id="AK163687">
    <property type="protein sequence ID" value="BAE37456.1"/>
    <property type="molecule type" value="mRNA"/>
</dbReference>
<dbReference type="EMBL" id="AK166875">
    <property type="protein sequence ID" value="BAE39086.1"/>
    <property type="molecule type" value="mRNA"/>
</dbReference>
<dbReference type="EMBL" id="AK166972">
    <property type="protein sequence ID" value="BAE39155.1"/>
    <property type="molecule type" value="mRNA"/>
</dbReference>
<dbReference type="EMBL" id="BC099613">
    <property type="protein sequence ID" value="AAH99613.1"/>
    <property type="molecule type" value="mRNA"/>
</dbReference>
<dbReference type="EMBL" id="BC132465">
    <property type="protein sequence ID" value="AAI32466.1"/>
    <property type="molecule type" value="mRNA"/>
</dbReference>
<dbReference type="EMBL" id="BC132467">
    <property type="protein sequence ID" value="AAI32468.1"/>
    <property type="molecule type" value="mRNA"/>
</dbReference>
<dbReference type="CCDS" id="CCDS22119.1">
    <molecule id="Q8C5P7-1"/>
</dbReference>
<dbReference type="RefSeq" id="NP_001348557.1">
    <molecule id="Q8C5P7-1"/>
    <property type="nucleotide sequence ID" value="NM_001361628.2"/>
</dbReference>
<dbReference type="RefSeq" id="NP_001348558.1">
    <molecule id="Q8C5P7-1"/>
    <property type="nucleotide sequence ID" value="NM_001361629.2"/>
</dbReference>
<dbReference type="RefSeq" id="NP_001348559.1">
    <molecule id="Q8C5P7-1"/>
    <property type="nucleotide sequence ID" value="NM_001361630.2"/>
</dbReference>
<dbReference type="RefSeq" id="NP_776105.1">
    <molecule id="Q8C5P7-1"/>
    <property type="nucleotide sequence ID" value="NM_173744.5"/>
</dbReference>
<dbReference type="RefSeq" id="XP_006508967.1">
    <property type="nucleotide sequence ID" value="XM_006508904.1"/>
</dbReference>
<dbReference type="RefSeq" id="XP_017168463.1">
    <property type="nucleotide sequence ID" value="XM_017312974.1"/>
</dbReference>
<dbReference type="BioGRID" id="215184">
    <property type="interactions" value="2"/>
</dbReference>
<dbReference type="FunCoup" id="Q8C5P7">
    <property type="interactions" value="1599"/>
</dbReference>
<dbReference type="IntAct" id="Q8C5P7">
    <property type="interactions" value="1"/>
</dbReference>
<dbReference type="STRING" id="10090.ENSMUSP00000058371"/>
<dbReference type="iPTMnet" id="Q8C5P7"/>
<dbReference type="PhosphoSitePlus" id="Q8C5P7"/>
<dbReference type="PaxDb" id="10090-ENSMUSP00000058371"/>
<dbReference type="PeptideAtlas" id="Q8C5P7"/>
<dbReference type="ProteomicsDB" id="262749">
    <molecule id="Q8C5P7-1"/>
</dbReference>
<dbReference type="ProteomicsDB" id="262750">
    <molecule id="Q8C5P7-2"/>
</dbReference>
<dbReference type="Pumba" id="Q8C5P7"/>
<dbReference type="Antibodypedia" id="2036">
    <property type="antibodies" value="49 antibodies from 12 providers"/>
</dbReference>
<dbReference type="DNASU" id="72148"/>
<dbReference type="Ensembl" id="ENSMUST00000062613.12">
    <molecule id="Q8C5P7-1"/>
    <property type="protein sequence ID" value="ENSMUSP00000058371.5"/>
    <property type="gene ID" value="ENSMUSG00000050052.13"/>
</dbReference>
<dbReference type="GeneID" id="72148"/>
<dbReference type="KEGG" id="mmu:72148"/>
<dbReference type="UCSC" id="uc009kyv.2">
    <molecule id="Q8C5P7-1"/>
    <property type="organism name" value="mouse"/>
</dbReference>
<dbReference type="AGR" id="MGI:1919398"/>
<dbReference type="CTD" id="157695"/>
<dbReference type="MGI" id="MGI:1919398">
    <property type="gene designation" value="Tdrp"/>
</dbReference>
<dbReference type="VEuPathDB" id="HostDB:ENSMUSG00000050052"/>
<dbReference type="eggNOG" id="ENOG502RYNW">
    <property type="taxonomic scope" value="Eukaryota"/>
</dbReference>
<dbReference type="GeneTree" id="ENSGT00390000017888"/>
<dbReference type="HOGENOM" id="CLU_094260_0_0_1"/>
<dbReference type="InParanoid" id="Q8C5P7"/>
<dbReference type="OMA" id="KGHCFWD"/>
<dbReference type="OrthoDB" id="9634112at2759"/>
<dbReference type="TreeFam" id="TF335521"/>
<dbReference type="BioGRID-ORCS" id="72148">
    <property type="hits" value="1 hit in 77 CRISPR screens"/>
</dbReference>
<dbReference type="ChiTaRS" id="Tdrp">
    <property type="organism name" value="mouse"/>
</dbReference>
<dbReference type="PRO" id="PR:Q8C5P7"/>
<dbReference type="Proteomes" id="UP000000589">
    <property type="component" value="Chromosome 8"/>
</dbReference>
<dbReference type="RNAct" id="Q8C5P7">
    <property type="molecule type" value="protein"/>
</dbReference>
<dbReference type="Bgee" id="ENSMUSG00000050052">
    <property type="expression patterns" value="Expressed in placenta labyrinth and 230 other cell types or tissues"/>
</dbReference>
<dbReference type="ExpressionAtlas" id="Q8C5P7">
    <property type="expression patterns" value="baseline and differential"/>
</dbReference>
<dbReference type="GO" id="GO:0005737">
    <property type="term" value="C:cytoplasm"/>
    <property type="evidence" value="ECO:0000250"/>
    <property type="project" value="UniProtKB"/>
</dbReference>
<dbReference type="GO" id="GO:0005829">
    <property type="term" value="C:cytosol"/>
    <property type="evidence" value="ECO:0007669"/>
    <property type="project" value="Ensembl"/>
</dbReference>
<dbReference type="GO" id="GO:0005634">
    <property type="term" value="C:nucleus"/>
    <property type="evidence" value="ECO:0000250"/>
    <property type="project" value="UniProtKB"/>
</dbReference>
<dbReference type="GO" id="GO:0007283">
    <property type="term" value="P:spermatogenesis"/>
    <property type="evidence" value="ECO:0000266"/>
    <property type="project" value="MGI"/>
</dbReference>
<dbReference type="InterPro" id="IPR031399">
    <property type="entry name" value="TDRP"/>
</dbReference>
<dbReference type="PANTHER" id="PTHR35663:SF1">
    <property type="entry name" value="TESTIS DEVELOPMENT-RELATED PROTEIN"/>
    <property type="match status" value="1"/>
</dbReference>
<dbReference type="PANTHER" id="PTHR35663">
    <property type="entry name" value="TESTIS DEVELOPMENT-RELATED PROTEIN-RELATED"/>
    <property type="match status" value="1"/>
</dbReference>
<dbReference type="Pfam" id="PF15683">
    <property type="entry name" value="TDRP"/>
    <property type="match status" value="1"/>
</dbReference>
<gene>
    <name type="primary">Tdrp</name>
</gene>
<keyword id="KW-0025">Alternative splicing</keyword>
<keyword id="KW-0963">Cytoplasm</keyword>
<keyword id="KW-0539">Nucleus</keyword>
<keyword id="KW-0597">Phosphoprotein</keyword>
<keyword id="KW-1185">Reference proteome</keyword>
<feature type="chain" id="PRO_0000308220" description="Testis development-related protein">
    <location>
        <begin position="1"/>
        <end position="182"/>
    </location>
</feature>
<feature type="region of interest" description="Disordered" evidence="2">
    <location>
        <begin position="1"/>
        <end position="38"/>
    </location>
</feature>
<feature type="region of interest" description="Disordered" evidence="2">
    <location>
        <begin position="52"/>
        <end position="73"/>
    </location>
</feature>
<feature type="region of interest" description="Disordered" evidence="2">
    <location>
        <begin position="95"/>
        <end position="151"/>
    </location>
</feature>
<feature type="compositionally biased region" description="Low complexity" evidence="2">
    <location>
        <begin position="22"/>
        <end position="37"/>
    </location>
</feature>
<feature type="compositionally biased region" description="Polar residues" evidence="2">
    <location>
        <begin position="59"/>
        <end position="70"/>
    </location>
</feature>
<feature type="compositionally biased region" description="Basic and acidic residues" evidence="2">
    <location>
        <begin position="116"/>
        <end position="125"/>
    </location>
</feature>
<feature type="modified residue" description="Phosphoserine" evidence="1">
    <location>
        <position position="7"/>
    </location>
</feature>
<feature type="splice variant" id="VSP_028924" description="In isoform 2." evidence="4">
    <original>SGASLRGWKEATSLFNKDDEEHLLETSRSPKSKGTNQRLREELKAEKKSGFWDALVLKQNAQPKKPDQIEGWEPPKLTAEDVVADHTEDDRSGCPPWSAWEDDTKGSTKYTSLANSASSSRWSLRSAGKLVSIRRQSKGHLTETCEEGE</original>
    <variation>SVRARVGAQVRAAGCSGGRAQVHGVACRVRTWQGPDASRGCEVTAPEDPSDEWPGPTGRGPQSQHVWGTAGTRTPGTFRTGRRRCPSLCCHKGFGVRLETPGTRGDRFQARYFYSGVGETEKS</variation>
    <location>
        <begin position="34"/>
        <end position="182"/>
    </location>
</feature>
<reference key="1">
    <citation type="journal article" date="2005" name="Science">
        <title>The transcriptional landscape of the mammalian genome.</title>
        <authorList>
            <person name="Carninci P."/>
            <person name="Kasukawa T."/>
            <person name="Katayama S."/>
            <person name="Gough J."/>
            <person name="Frith M.C."/>
            <person name="Maeda N."/>
            <person name="Oyama R."/>
            <person name="Ravasi T."/>
            <person name="Lenhard B."/>
            <person name="Wells C."/>
            <person name="Kodzius R."/>
            <person name="Shimokawa K."/>
            <person name="Bajic V.B."/>
            <person name="Brenner S.E."/>
            <person name="Batalov S."/>
            <person name="Forrest A.R."/>
            <person name="Zavolan M."/>
            <person name="Davis M.J."/>
            <person name="Wilming L.G."/>
            <person name="Aidinis V."/>
            <person name="Allen J.E."/>
            <person name="Ambesi-Impiombato A."/>
            <person name="Apweiler R."/>
            <person name="Aturaliya R.N."/>
            <person name="Bailey T.L."/>
            <person name="Bansal M."/>
            <person name="Baxter L."/>
            <person name="Beisel K.W."/>
            <person name="Bersano T."/>
            <person name="Bono H."/>
            <person name="Chalk A.M."/>
            <person name="Chiu K.P."/>
            <person name="Choudhary V."/>
            <person name="Christoffels A."/>
            <person name="Clutterbuck D.R."/>
            <person name="Crowe M.L."/>
            <person name="Dalla E."/>
            <person name="Dalrymple B.P."/>
            <person name="de Bono B."/>
            <person name="Della Gatta G."/>
            <person name="di Bernardo D."/>
            <person name="Down T."/>
            <person name="Engstrom P."/>
            <person name="Fagiolini M."/>
            <person name="Faulkner G."/>
            <person name="Fletcher C.F."/>
            <person name="Fukushima T."/>
            <person name="Furuno M."/>
            <person name="Futaki S."/>
            <person name="Gariboldi M."/>
            <person name="Georgii-Hemming P."/>
            <person name="Gingeras T.R."/>
            <person name="Gojobori T."/>
            <person name="Green R.E."/>
            <person name="Gustincich S."/>
            <person name="Harbers M."/>
            <person name="Hayashi Y."/>
            <person name="Hensch T.K."/>
            <person name="Hirokawa N."/>
            <person name="Hill D."/>
            <person name="Huminiecki L."/>
            <person name="Iacono M."/>
            <person name="Ikeo K."/>
            <person name="Iwama A."/>
            <person name="Ishikawa T."/>
            <person name="Jakt M."/>
            <person name="Kanapin A."/>
            <person name="Katoh M."/>
            <person name="Kawasawa Y."/>
            <person name="Kelso J."/>
            <person name="Kitamura H."/>
            <person name="Kitano H."/>
            <person name="Kollias G."/>
            <person name="Krishnan S.P."/>
            <person name="Kruger A."/>
            <person name="Kummerfeld S.K."/>
            <person name="Kurochkin I.V."/>
            <person name="Lareau L.F."/>
            <person name="Lazarevic D."/>
            <person name="Lipovich L."/>
            <person name="Liu J."/>
            <person name="Liuni S."/>
            <person name="McWilliam S."/>
            <person name="Madan Babu M."/>
            <person name="Madera M."/>
            <person name="Marchionni L."/>
            <person name="Matsuda H."/>
            <person name="Matsuzawa S."/>
            <person name="Miki H."/>
            <person name="Mignone F."/>
            <person name="Miyake S."/>
            <person name="Morris K."/>
            <person name="Mottagui-Tabar S."/>
            <person name="Mulder N."/>
            <person name="Nakano N."/>
            <person name="Nakauchi H."/>
            <person name="Ng P."/>
            <person name="Nilsson R."/>
            <person name="Nishiguchi S."/>
            <person name="Nishikawa S."/>
            <person name="Nori F."/>
            <person name="Ohara O."/>
            <person name="Okazaki Y."/>
            <person name="Orlando V."/>
            <person name="Pang K.C."/>
            <person name="Pavan W.J."/>
            <person name="Pavesi G."/>
            <person name="Pesole G."/>
            <person name="Petrovsky N."/>
            <person name="Piazza S."/>
            <person name="Reed J."/>
            <person name="Reid J.F."/>
            <person name="Ring B.Z."/>
            <person name="Ringwald M."/>
            <person name="Rost B."/>
            <person name="Ruan Y."/>
            <person name="Salzberg S.L."/>
            <person name="Sandelin A."/>
            <person name="Schneider C."/>
            <person name="Schoenbach C."/>
            <person name="Sekiguchi K."/>
            <person name="Semple C.A."/>
            <person name="Seno S."/>
            <person name="Sessa L."/>
            <person name="Sheng Y."/>
            <person name="Shibata Y."/>
            <person name="Shimada H."/>
            <person name="Shimada K."/>
            <person name="Silva D."/>
            <person name="Sinclair B."/>
            <person name="Sperling S."/>
            <person name="Stupka E."/>
            <person name="Sugiura K."/>
            <person name="Sultana R."/>
            <person name="Takenaka Y."/>
            <person name="Taki K."/>
            <person name="Tammoja K."/>
            <person name="Tan S.L."/>
            <person name="Tang S."/>
            <person name="Taylor M.S."/>
            <person name="Tegner J."/>
            <person name="Teichmann S.A."/>
            <person name="Ueda H.R."/>
            <person name="van Nimwegen E."/>
            <person name="Verardo R."/>
            <person name="Wei C.L."/>
            <person name="Yagi K."/>
            <person name="Yamanishi H."/>
            <person name="Zabarovsky E."/>
            <person name="Zhu S."/>
            <person name="Zimmer A."/>
            <person name="Hide W."/>
            <person name="Bult C."/>
            <person name="Grimmond S.M."/>
            <person name="Teasdale R.D."/>
            <person name="Liu E.T."/>
            <person name="Brusic V."/>
            <person name="Quackenbush J."/>
            <person name="Wahlestedt C."/>
            <person name="Mattick J.S."/>
            <person name="Hume D.A."/>
            <person name="Kai C."/>
            <person name="Sasaki D."/>
            <person name="Tomaru Y."/>
            <person name="Fukuda S."/>
            <person name="Kanamori-Katayama M."/>
            <person name="Suzuki M."/>
            <person name="Aoki J."/>
            <person name="Arakawa T."/>
            <person name="Iida J."/>
            <person name="Imamura K."/>
            <person name="Itoh M."/>
            <person name="Kato T."/>
            <person name="Kawaji H."/>
            <person name="Kawagashira N."/>
            <person name="Kawashima T."/>
            <person name="Kojima M."/>
            <person name="Kondo S."/>
            <person name="Konno H."/>
            <person name="Nakano K."/>
            <person name="Ninomiya N."/>
            <person name="Nishio T."/>
            <person name="Okada M."/>
            <person name="Plessy C."/>
            <person name="Shibata K."/>
            <person name="Shiraki T."/>
            <person name="Suzuki S."/>
            <person name="Tagami M."/>
            <person name="Waki K."/>
            <person name="Watahiki A."/>
            <person name="Okamura-Oho Y."/>
            <person name="Suzuki H."/>
            <person name="Kawai J."/>
            <person name="Hayashizaki Y."/>
        </authorList>
    </citation>
    <scope>NUCLEOTIDE SEQUENCE [LARGE SCALE MRNA] (ISOFORMS 1 AND 2)</scope>
    <source>
        <strain>C57BL/6J</strain>
        <tissue>Cerebellum</tissue>
        <tissue>Thymus</tissue>
    </source>
</reference>
<reference key="2">
    <citation type="journal article" date="2004" name="Genome Res.">
        <title>The status, quality, and expansion of the NIH full-length cDNA project: the Mammalian Gene Collection (MGC).</title>
        <authorList>
            <consortium name="The MGC Project Team"/>
        </authorList>
    </citation>
    <scope>NUCLEOTIDE SEQUENCE [LARGE SCALE MRNA] (ISOFORM 1)</scope>
    <source>
        <strain>C57BL/6J</strain>
        <tissue>Blastocyst</tissue>
        <tissue>Brain</tissue>
    </source>
</reference>
<reference key="3">
    <citation type="journal article" date="2010" name="Cell">
        <title>A tissue-specific atlas of mouse protein phosphorylation and expression.</title>
        <authorList>
            <person name="Huttlin E.L."/>
            <person name="Jedrychowski M.P."/>
            <person name="Elias J.E."/>
            <person name="Goswami T."/>
            <person name="Rad R."/>
            <person name="Beausoleil S.A."/>
            <person name="Villen J."/>
            <person name="Haas W."/>
            <person name="Sowa M.E."/>
            <person name="Gygi S.P."/>
        </authorList>
    </citation>
    <scope>IDENTIFICATION BY MASS SPECTROMETRY [LARGE SCALE ANALYSIS]</scope>
    <source>
        <tissue>Brain</tissue>
        <tissue>Testis</tissue>
    </source>
</reference>
<reference key="4">
    <citation type="journal article" date="2016" name="Am. J. Transl. Res.">
        <title>TDRP deficiency contributes to low sperm motility and is a potential risk factor for male infertility.</title>
        <authorList>
            <person name="Mao S."/>
            <person name="Wu F."/>
            <person name="Cao X."/>
            <person name="He M."/>
            <person name="Liu N."/>
            <person name="Wu H."/>
            <person name="Yang Z."/>
            <person name="Ding Q."/>
            <person name="Wang X."/>
        </authorList>
    </citation>
    <scope>FUNCTION</scope>
    <scope>INTERACTION WITH PRM2</scope>
    <scope>SUBCELLULAR LOCATION</scope>
    <scope>TISSUE SPECIFICITY</scope>
    <scope>DISRUPTION PHENOTYPE</scope>
</reference>
<sequence>MWKLSRSRVLLDEPPEEEDVLRGAPPASAAAPASGASLRGWKEATSLFNKDDEEHLLETSRSPKSKGTNQRLREELKAEKKSGFWDALVLKQNAQPKKPDQIEGWEPPKLTAEDVVADHTEDDRSGCPPWSAWEDDTKGSTKYTSLANSASSSRWSLRSAGKLVSIRRQSKGHLTETCEEGE</sequence>
<comment type="function">
    <text evidence="3">Contributes to normal sperm motility, but not essential for male fertility.</text>
</comment>
<comment type="subunit">
    <text evidence="3">Interacts with PRM2.</text>
</comment>
<comment type="subcellular location">
    <subcellularLocation>
        <location evidence="3">Nucleus</location>
    </subcellularLocation>
    <subcellularLocation>
        <location evidence="3">Cytoplasm</location>
    </subcellularLocation>
    <text evidence="3">Mainly nuclear. Also detected in cytoplasm near the midpiece of the flagellum.</text>
</comment>
<comment type="alternative products">
    <event type="alternative splicing"/>
    <isoform>
        <id>Q8C5P7-1</id>
        <name>1</name>
        <sequence type="displayed"/>
    </isoform>
    <isoform>
        <id>Q8C5P7-2</id>
        <name>2</name>
        <sequence type="described" ref="VSP_028924"/>
    </isoform>
</comment>
<comment type="tissue specificity">
    <text evidence="3">Strongly expressed in testis. Also detected at lower levels in epididymis, bone marrow and kidney.</text>
</comment>
<comment type="disruption phenotype">
    <text evidence="3">Viable with no gross morphological defects. Morphology of testis tissue and mature epididymal sperm is normal. Sperm counts are also normal. Sperm motility is reduced, however this has no significant effect on male fertility.</text>
</comment>
<comment type="similarity">
    <text evidence="5">Belongs to the TDRP family.</text>
</comment>
<proteinExistence type="evidence at protein level"/>
<accession>Q8C5P7</accession>
<accession>Q3TQC8</accession>
<name>TDRP_MOUSE</name>
<evidence type="ECO:0000250" key="1">
    <source>
        <dbReference type="UniProtKB" id="Q498E2"/>
    </source>
</evidence>
<evidence type="ECO:0000256" key="2">
    <source>
        <dbReference type="SAM" id="MobiDB-lite"/>
    </source>
</evidence>
<evidence type="ECO:0000269" key="3">
    <source>
    </source>
</evidence>
<evidence type="ECO:0000303" key="4">
    <source>
    </source>
</evidence>
<evidence type="ECO:0000305" key="5"/>